<protein>
    <recommendedName>
        <fullName evidence="1">SsrA-binding protein</fullName>
    </recommendedName>
    <alternativeName>
        <fullName evidence="1">Small protein B</fullName>
    </alternativeName>
</protein>
<gene>
    <name evidence="1" type="primary">smpB</name>
    <name type="ordered locus">CTA_0081</name>
</gene>
<comment type="function">
    <text evidence="1">Required for rescue of stalled ribosomes mediated by trans-translation. Binds to transfer-messenger RNA (tmRNA), required for stable association of tmRNA with ribosomes. tmRNA and SmpB together mimic tRNA shape, replacing the anticodon stem-loop with SmpB. tmRNA is encoded by the ssrA gene; the 2 termini fold to resemble tRNA(Ala) and it encodes a 'tag peptide', a short internal open reading frame. During trans-translation Ala-aminoacylated tmRNA acts like a tRNA, entering the A-site of stalled ribosomes, displacing the stalled mRNA. The ribosome then switches to translate the ORF on the tmRNA; the nascent peptide is terminated with the 'tag peptide' encoded by the tmRNA and targeted for degradation. The ribosome is freed to recommence translation, which seems to be the essential function of trans-translation.</text>
</comment>
<comment type="subcellular location">
    <subcellularLocation>
        <location evidence="1">Cytoplasm</location>
    </subcellularLocation>
    <text evidence="1">The tmRNA-SmpB complex associates with stalled 70S ribosomes.</text>
</comment>
<comment type="similarity">
    <text evidence="1">Belongs to the SmpB family.</text>
</comment>
<feature type="chain" id="PRO_1000002030" description="SsrA-binding protein">
    <location>
        <begin position="1"/>
        <end position="151"/>
    </location>
</feature>
<accession>Q3KMU5</accession>
<dbReference type="EMBL" id="CP000051">
    <property type="protein sequence ID" value="AAX50327.1"/>
    <property type="molecule type" value="Genomic_DNA"/>
</dbReference>
<dbReference type="RefSeq" id="WP_009872362.1">
    <property type="nucleotide sequence ID" value="NC_007429.1"/>
</dbReference>
<dbReference type="SMR" id="Q3KMU5"/>
<dbReference type="KEGG" id="cta:CTA_0081"/>
<dbReference type="HOGENOM" id="CLU_108953_0_0_0"/>
<dbReference type="Proteomes" id="UP000002532">
    <property type="component" value="Chromosome"/>
</dbReference>
<dbReference type="GO" id="GO:0005829">
    <property type="term" value="C:cytosol"/>
    <property type="evidence" value="ECO:0007669"/>
    <property type="project" value="TreeGrafter"/>
</dbReference>
<dbReference type="GO" id="GO:0003723">
    <property type="term" value="F:RNA binding"/>
    <property type="evidence" value="ECO:0007669"/>
    <property type="project" value="UniProtKB-UniRule"/>
</dbReference>
<dbReference type="GO" id="GO:0070929">
    <property type="term" value="P:trans-translation"/>
    <property type="evidence" value="ECO:0007669"/>
    <property type="project" value="UniProtKB-UniRule"/>
</dbReference>
<dbReference type="CDD" id="cd09294">
    <property type="entry name" value="SmpB"/>
    <property type="match status" value="1"/>
</dbReference>
<dbReference type="Gene3D" id="2.40.280.10">
    <property type="match status" value="1"/>
</dbReference>
<dbReference type="HAMAP" id="MF_00023">
    <property type="entry name" value="SmpB"/>
    <property type="match status" value="1"/>
</dbReference>
<dbReference type="InterPro" id="IPR023620">
    <property type="entry name" value="SmpB"/>
</dbReference>
<dbReference type="InterPro" id="IPR000037">
    <property type="entry name" value="SsrA-bd_prot"/>
</dbReference>
<dbReference type="InterPro" id="IPR020081">
    <property type="entry name" value="SsrA-bd_prot_CS"/>
</dbReference>
<dbReference type="NCBIfam" id="NF003843">
    <property type="entry name" value="PRK05422.1"/>
    <property type="match status" value="1"/>
</dbReference>
<dbReference type="NCBIfam" id="TIGR00086">
    <property type="entry name" value="smpB"/>
    <property type="match status" value="1"/>
</dbReference>
<dbReference type="PANTHER" id="PTHR30308:SF2">
    <property type="entry name" value="SSRA-BINDING PROTEIN"/>
    <property type="match status" value="1"/>
</dbReference>
<dbReference type="PANTHER" id="PTHR30308">
    <property type="entry name" value="TMRNA-BINDING COMPONENT OF TRANS-TRANSLATION TAGGING COMPLEX"/>
    <property type="match status" value="1"/>
</dbReference>
<dbReference type="Pfam" id="PF01668">
    <property type="entry name" value="SmpB"/>
    <property type="match status" value="1"/>
</dbReference>
<dbReference type="SUPFAM" id="SSF74982">
    <property type="entry name" value="Small protein B (SmpB)"/>
    <property type="match status" value="1"/>
</dbReference>
<dbReference type="PROSITE" id="PS01317">
    <property type="entry name" value="SSRP"/>
    <property type="match status" value="1"/>
</dbReference>
<reference key="1">
    <citation type="journal article" date="2005" name="Infect. Immun.">
        <title>Comparative genomic analysis of Chlamydia trachomatis oculotropic and genitotropic strains.</title>
        <authorList>
            <person name="Carlson J.H."/>
            <person name="Porcella S.F."/>
            <person name="McClarty G."/>
            <person name="Caldwell H.D."/>
        </authorList>
    </citation>
    <scope>NUCLEOTIDE SEQUENCE [LARGE SCALE GENOMIC DNA]</scope>
    <source>
        <strain>ATCC VR-571B / DSM 19440 / HAR-13</strain>
    </source>
</reference>
<proteinExistence type="inferred from homology"/>
<organism>
    <name type="scientific">Chlamydia trachomatis serovar A (strain ATCC VR-571B / DSM 19440 / HAR-13)</name>
    <dbReference type="NCBI Taxonomy" id="315277"/>
    <lineage>
        <taxon>Bacteria</taxon>
        <taxon>Pseudomonadati</taxon>
        <taxon>Chlamydiota</taxon>
        <taxon>Chlamydiia</taxon>
        <taxon>Chlamydiales</taxon>
        <taxon>Chlamydiaceae</taxon>
        <taxon>Chlamydia/Chlamydophila group</taxon>
        <taxon>Chlamydia</taxon>
    </lineage>
</organism>
<keyword id="KW-0963">Cytoplasm</keyword>
<keyword id="KW-0694">RNA-binding</keyword>
<name>SSRP_CHLTA</name>
<sequence>MGVKEIVSNRKAFHHYEVLETLDAGIVLTGTEIKSLRDHGGNLGDAYVTISKGEAWLLQSSIAPYRFGNINNHEERRKRKLLLHKYEIHKLDARISQKGLTVVPLSFFFSKGFVKVRIGCCRGKKAHDKRQSIIEREKNRELAAAMKRSYR</sequence>
<evidence type="ECO:0000255" key="1">
    <source>
        <dbReference type="HAMAP-Rule" id="MF_00023"/>
    </source>
</evidence>